<organism>
    <name type="scientific">Xenopus laevis</name>
    <name type="common">African clawed frog</name>
    <dbReference type="NCBI Taxonomy" id="8355"/>
    <lineage>
        <taxon>Eukaryota</taxon>
        <taxon>Metazoa</taxon>
        <taxon>Chordata</taxon>
        <taxon>Craniata</taxon>
        <taxon>Vertebrata</taxon>
        <taxon>Euteleostomi</taxon>
        <taxon>Amphibia</taxon>
        <taxon>Batrachia</taxon>
        <taxon>Anura</taxon>
        <taxon>Pipoidea</taxon>
        <taxon>Pipidae</taxon>
        <taxon>Xenopodinae</taxon>
        <taxon>Xenopus</taxon>
        <taxon>Xenopus</taxon>
    </lineage>
</organism>
<sequence>MRFRWKFFGSLLCVTGLLLVLYRQLGNVPQPPPGPASAQGSPSLTATSGYFRALEDHVPRRDARQGGKKKTNWNNVRAPEQKPNPPMPEEWMHLAVVACGDRLEETVTMLKSAVLFSFKKIKFHIFAEDSLKSDFQMKLEIWPQQISRKIEYKIYPITFPGGNTQEWKKLFKPCAAQRLFLPMLLQDVDSLLYVDTDVLFLRPLDHVWAFLRRFNDTQLAAMAPEHEISKIGWYSRFARHPFYGTTGVNSGVMLMNLTRIRNQHFKNNMIPAGLTWEEMLHPLYQKYKNYITWGDQDLLNIIFYFNPEMLYVFPCHWNYRPDHCMYGSNCKAAEEEGVSILHGNRGVYHDEKQPAFKAFYEVIRDYTFDDNLFQSMYFPLQSKFLESVHTLCGRIPQVFLKQIEKTMKMMYERRVVVHIRSDV</sequence>
<proteinExistence type="evidence at transcript level"/>
<evidence type="ECO:0000250" key="1">
    <source>
        <dbReference type="UniProtKB" id="A0PJZ3"/>
    </source>
</evidence>
<evidence type="ECO:0000250" key="2">
    <source>
        <dbReference type="UniProtKB" id="Q4G148"/>
    </source>
</evidence>
<evidence type="ECO:0000255" key="3"/>
<evidence type="ECO:0000256" key="4">
    <source>
        <dbReference type="SAM" id="MobiDB-lite"/>
    </source>
</evidence>
<evidence type="ECO:0000305" key="5"/>
<name>GXLT2_XENLA</name>
<protein>
    <recommendedName>
        <fullName>Glucoside xylosyltransferase 2</fullName>
        <ecNumber evidence="2">2.4.2.42</ecNumber>
    </recommendedName>
    <alternativeName>
        <fullName>Glycosyltransferase 8 domain-containing protein 4</fullName>
    </alternativeName>
</protein>
<feature type="chain" id="PRO_0000288541" description="Glucoside xylosyltransferase 2">
    <location>
        <begin position="1"/>
        <end position="423"/>
    </location>
</feature>
<feature type="topological domain" description="Cytoplasmic" evidence="3">
    <location>
        <begin position="1"/>
        <end position="6"/>
    </location>
</feature>
<feature type="transmembrane region" description="Helical; Signal-anchor for type II membrane protein" evidence="3">
    <location>
        <begin position="7"/>
        <end position="26"/>
    </location>
</feature>
<feature type="topological domain" description="Lumenal" evidence="3">
    <location>
        <begin position="27"/>
        <end position="423"/>
    </location>
</feature>
<feature type="region of interest" description="Disordered" evidence="4">
    <location>
        <begin position="60"/>
        <end position="85"/>
    </location>
</feature>
<feature type="glycosylation site" description="N-linked (GlcNAc...) asparagine" evidence="3">
    <location>
        <position position="215"/>
    </location>
</feature>
<feature type="glycosylation site" description="N-linked (GlcNAc...) asparagine" evidence="3">
    <location>
        <position position="256"/>
    </location>
</feature>
<keyword id="KW-0325">Glycoprotein</keyword>
<keyword id="KW-0328">Glycosyltransferase</keyword>
<keyword id="KW-0472">Membrane</keyword>
<keyword id="KW-1185">Reference proteome</keyword>
<keyword id="KW-0735">Signal-anchor</keyword>
<keyword id="KW-0808">Transferase</keyword>
<keyword id="KW-0812">Transmembrane</keyword>
<keyword id="KW-1133">Transmembrane helix</keyword>
<gene>
    <name type="primary">gxylt2</name>
    <name type="synonym">glt8d4</name>
</gene>
<accession>Q6DE37</accession>
<dbReference type="EC" id="2.4.2.42" evidence="2"/>
<dbReference type="EMBL" id="BC077307">
    <property type="protein sequence ID" value="AAH77307.1"/>
    <property type="molecule type" value="mRNA"/>
</dbReference>
<dbReference type="RefSeq" id="NP_001086684.1">
    <property type="nucleotide sequence ID" value="NM_001093215.1"/>
</dbReference>
<dbReference type="SMR" id="Q6DE37"/>
<dbReference type="CAZy" id="GT8">
    <property type="family name" value="Glycosyltransferase Family 8"/>
</dbReference>
<dbReference type="GlyCosmos" id="Q6DE37">
    <property type="glycosylation" value="2 sites, No reported glycans"/>
</dbReference>
<dbReference type="GeneID" id="446519"/>
<dbReference type="KEGG" id="xla:446519"/>
<dbReference type="AGR" id="Xenbase:XB-GENE-5889631"/>
<dbReference type="CTD" id="446519"/>
<dbReference type="Xenbase" id="XB-GENE-5889631">
    <property type="gene designation" value="gxylt2.S"/>
</dbReference>
<dbReference type="OrthoDB" id="6238971at2759"/>
<dbReference type="Proteomes" id="UP000186698">
    <property type="component" value="Chromosome 4S"/>
</dbReference>
<dbReference type="Bgee" id="446519">
    <property type="expression patterns" value="Expressed in neurula embryo and 19 other cell types or tissues"/>
</dbReference>
<dbReference type="GO" id="GO:0016020">
    <property type="term" value="C:membrane"/>
    <property type="evidence" value="ECO:0007669"/>
    <property type="project" value="UniProtKB-SubCell"/>
</dbReference>
<dbReference type="GO" id="GO:0140563">
    <property type="term" value="F:UDP-D-xylose:beta-D-glucoside alpha-1,3-D-xylosyltransferase activity"/>
    <property type="evidence" value="ECO:0007669"/>
    <property type="project" value="UniProtKB-EC"/>
</dbReference>
<dbReference type="GO" id="GO:0035252">
    <property type="term" value="F:UDP-xylosyltransferase activity"/>
    <property type="evidence" value="ECO:0000250"/>
    <property type="project" value="UniProtKB"/>
</dbReference>
<dbReference type="GO" id="GO:0016266">
    <property type="term" value="P:O-glycan processing"/>
    <property type="evidence" value="ECO:0000250"/>
    <property type="project" value="UniProtKB"/>
</dbReference>
<dbReference type="CDD" id="cd06430">
    <property type="entry name" value="GT8_like_2"/>
    <property type="match status" value="1"/>
</dbReference>
<dbReference type="FunFam" id="3.90.550.10:FF:000042">
    <property type="entry name" value="Glucoside xylosyltransferase 1"/>
    <property type="match status" value="1"/>
</dbReference>
<dbReference type="Gene3D" id="3.90.550.10">
    <property type="entry name" value="Spore Coat Polysaccharide Biosynthesis Protein SpsA, Chain A"/>
    <property type="match status" value="1"/>
</dbReference>
<dbReference type="InterPro" id="IPR002495">
    <property type="entry name" value="Glyco_trans_8"/>
</dbReference>
<dbReference type="InterPro" id="IPR051993">
    <property type="entry name" value="Glycosyltransferase_8"/>
</dbReference>
<dbReference type="InterPro" id="IPR029044">
    <property type="entry name" value="Nucleotide-diphossugar_trans"/>
</dbReference>
<dbReference type="PANTHER" id="PTHR46012:SF1">
    <property type="entry name" value="GLUCOSIDE XYLOSYLTRANSFERASE 2"/>
    <property type="match status" value="1"/>
</dbReference>
<dbReference type="PANTHER" id="PTHR46012">
    <property type="entry name" value="IP22168P"/>
    <property type="match status" value="1"/>
</dbReference>
<dbReference type="Pfam" id="PF01501">
    <property type="entry name" value="Glyco_transf_8"/>
    <property type="match status" value="1"/>
</dbReference>
<dbReference type="SUPFAM" id="SSF53448">
    <property type="entry name" value="Nucleotide-diphospho-sugar transferases"/>
    <property type="match status" value="1"/>
</dbReference>
<reference key="1">
    <citation type="submission" date="2004-07" db="EMBL/GenBank/DDBJ databases">
        <authorList>
            <consortium name="NIH - Xenopus Gene Collection (XGC) project"/>
        </authorList>
    </citation>
    <scope>NUCLEOTIDE SEQUENCE [LARGE SCALE MRNA]</scope>
    <source>
        <tissue>Embryo</tissue>
    </source>
</reference>
<comment type="function">
    <text evidence="1">Glycosyltransferase which elongates the O-linked glucose attached to EGF-like repeats in the extracellular domain of Notch proteins by catalyzing the addition of xylose.</text>
</comment>
<comment type="catalytic activity">
    <reaction evidence="2">
        <text>3-O-(beta-D-glucosyl)-L-seryl-[EGF-like domain protein] + UDP-alpha-D-xylose = 3-O-[alpha-D-xylosyl-(1-&gt;3)-beta-D-glucosyl]-L-seryl-[EGF-like domain protein] + UDP + H(+)</text>
        <dbReference type="Rhea" id="RHEA:56064"/>
        <dbReference type="Rhea" id="RHEA-COMP:14610"/>
        <dbReference type="Rhea" id="RHEA-COMP:14611"/>
        <dbReference type="ChEBI" id="CHEBI:15378"/>
        <dbReference type="ChEBI" id="CHEBI:57632"/>
        <dbReference type="ChEBI" id="CHEBI:58223"/>
        <dbReference type="ChEBI" id="CHEBI:140575"/>
        <dbReference type="ChEBI" id="CHEBI:140576"/>
        <dbReference type="EC" id="2.4.2.42"/>
    </reaction>
</comment>
<comment type="subcellular location">
    <subcellularLocation>
        <location evidence="5">Membrane</location>
        <topology evidence="5">Single-pass type II membrane protein</topology>
    </subcellularLocation>
</comment>
<comment type="similarity">
    <text evidence="5">Belongs to the glycosyltransferase 8 family.</text>
</comment>